<gene>
    <name evidence="1" type="primary">plsY</name>
    <name type="ordered locus">Suden_0666</name>
</gene>
<reference key="1">
    <citation type="journal article" date="2008" name="Appl. Environ. Microbiol.">
        <title>Genome of the epsilonproteobacterial chemolithoautotroph Sulfurimonas denitrificans.</title>
        <authorList>
            <person name="Sievert S.M."/>
            <person name="Scott K.M."/>
            <person name="Klotz M.G."/>
            <person name="Chain P.S.G."/>
            <person name="Hauser L.J."/>
            <person name="Hemp J."/>
            <person name="Huegler M."/>
            <person name="Land M."/>
            <person name="Lapidus A."/>
            <person name="Larimer F.W."/>
            <person name="Lucas S."/>
            <person name="Malfatti S.A."/>
            <person name="Meyer F."/>
            <person name="Paulsen I.T."/>
            <person name="Ren Q."/>
            <person name="Simon J."/>
            <person name="Bailey K."/>
            <person name="Diaz E."/>
            <person name="Fitzpatrick K.A."/>
            <person name="Glover B."/>
            <person name="Gwatney N."/>
            <person name="Korajkic A."/>
            <person name="Long A."/>
            <person name="Mobberley J.M."/>
            <person name="Pantry S.N."/>
            <person name="Pazder G."/>
            <person name="Peterson S."/>
            <person name="Quintanilla J.D."/>
            <person name="Sprinkle R."/>
            <person name="Stephens J."/>
            <person name="Thomas P."/>
            <person name="Vaughn R."/>
            <person name="Weber M.J."/>
            <person name="Wooten L.L."/>
        </authorList>
    </citation>
    <scope>NUCLEOTIDE SEQUENCE [LARGE SCALE GENOMIC DNA]</scope>
    <source>
        <strain>ATCC 33889 / DSM 1251</strain>
    </source>
</reference>
<proteinExistence type="inferred from homology"/>
<evidence type="ECO:0000255" key="1">
    <source>
        <dbReference type="HAMAP-Rule" id="MF_01043"/>
    </source>
</evidence>
<keyword id="KW-0997">Cell inner membrane</keyword>
<keyword id="KW-1003">Cell membrane</keyword>
<keyword id="KW-0444">Lipid biosynthesis</keyword>
<keyword id="KW-0443">Lipid metabolism</keyword>
<keyword id="KW-0472">Membrane</keyword>
<keyword id="KW-0594">Phospholipid biosynthesis</keyword>
<keyword id="KW-1208">Phospholipid metabolism</keyword>
<keyword id="KW-1185">Reference proteome</keyword>
<keyword id="KW-0808">Transferase</keyword>
<keyword id="KW-0812">Transmembrane</keyword>
<keyword id="KW-1133">Transmembrane helix</keyword>
<sequence>MDFLFNTNAQFFIAAYLIGAIPFGLLLAKKYAGVDVKSSGSGSIGATNVLRVVKQSNPALAKKLGAATLLLDALKGVLVLLFAYFYGVSEATLWGISVLAVLGHCYSPYLGFEGGKGVATGMGVMMFMLPLETIIALVVWALGAKFIRISSLSSLTALGALIVASFILHPDMAHAPVIIIGFVLLYKHIPNIIRLFKGEEKRVV</sequence>
<protein>
    <recommendedName>
        <fullName evidence="1">Glycerol-3-phosphate acyltransferase</fullName>
    </recommendedName>
    <alternativeName>
        <fullName evidence="1">Acyl-PO4 G3P acyltransferase</fullName>
    </alternativeName>
    <alternativeName>
        <fullName evidence="1">Acyl-phosphate--glycerol-3-phosphate acyltransferase</fullName>
    </alternativeName>
    <alternativeName>
        <fullName evidence="1">G3P acyltransferase</fullName>
        <shortName evidence="1">GPAT</shortName>
        <ecNumber evidence="1">2.3.1.275</ecNumber>
    </alternativeName>
    <alternativeName>
        <fullName evidence="1">Lysophosphatidic acid synthase</fullName>
        <shortName evidence="1">LPA synthase</shortName>
    </alternativeName>
</protein>
<comment type="function">
    <text evidence="1">Catalyzes the transfer of an acyl group from acyl-phosphate (acyl-PO(4)) to glycerol-3-phosphate (G3P) to form lysophosphatidic acid (LPA). This enzyme utilizes acyl-phosphate as fatty acyl donor, but not acyl-CoA or acyl-ACP.</text>
</comment>
<comment type="catalytic activity">
    <reaction evidence="1">
        <text>an acyl phosphate + sn-glycerol 3-phosphate = a 1-acyl-sn-glycero-3-phosphate + phosphate</text>
        <dbReference type="Rhea" id="RHEA:34075"/>
        <dbReference type="ChEBI" id="CHEBI:43474"/>
        <dbReference type="ChEBI" id="CHEBI:57597"/>
        <dbReference type="ChEBI" id="CHEBI:57970"/>
        <dbReference type="ChEBI" id="CHEBI:59918"/>
        <dbReference type="EC" id="2.3.1.275"/>
    </reaction>
</comment>
<comment type="pathway">
    <text evidence="1">Lipid metabolism; phospholipid metabolism.</text>
</comment>
<comment type="subunit">
    <text evidence="1">Probably interacts with PlsX.</text>
</comment>
<comment type="subcellular location">
    <subcellularLocation>
        <location evidence="1">Cell inner membrane</location>
        <topology evidence="1">Multi-pass membrane protein</topology>
    </subcellularLocation>
</comment>
<comment type="similarity">
    <text evidence="1">Belongs to the PlsY family.</text>
</comment>
<dbReference type="EC" id="2.3.1.275" evidence="1"/>
<dbReference type="EMBL" id="CP000153">
    <property type="protein sequence ID" value="ABB43945.1"/>
    <property type="molecule type" value="Genomic_DNA"/>
</dbReference>
<dbReference type="RefSeq" id="WP_011372299.1">
    <property type="nucleotide sequence ID" value="NC_007575.1"/>
</dbReference>
<dbReference type="SMR" id="Q30ST6"/>
<dbReference type="STRING" id="326298.Suden_0666"/>
<dbReference type="KEGG" id="tdn:Suden_0666"/>
<dbReference type="eggNOG" id="COG0344">
    <property type="taxonomic scope" value="Bacteria"/>
</dbReference>
<dbReference type="HOGENOM" id="CLU_081254_2_0_7"/>
<dbReference type="OrthoDB" id="9777124at2"/>
<dbReference type="UniPathway" id="UPA00085"/>
<dbReference type="Proteomes" id="UP000002714">
    <property type="component" value="Chromosome"/>
</dbReference>
<dbReference type="GO" id="GO:0005886">
    <property type="term" value="C:plasma membrane"/>
    <property type="evidence" value="ECO:0007669"/>
    <property type="project" value="UniProtKB-SubCell"/>
</dbReference>
<dbReference type="GO" id="GO:0043772">
    <property type="term" value="F:acyl-phosphate glycerol-3-phosphate acyltransferase activity"/>
    <property type="evidence" value="ECO:0007669"/>
    <property type="project" value="UniProtKB-UniRule"/>
</dbReference>
<dbReference type="GO" id="GO:0008654">
    <property type="term" value="P:phospholipid biosynthetic process"/>
    <property type="evidence" value="ECO:0007669"/>
    <property type="project" value="UniProtKB-UniRule"/>
</dbReference>
<dbReference type="HAMAP" id="MF_01043">
    <property type="entry name" value="PlsY"/>
    <property type="match status" value="1"/>
</dbReference>
<dbReference type="InterPro" id="IPR003811">
    <property type="entry name" value="G3P_acylTferase_PlsY"/>
</dbReference>
<dbReference type="NCBIfam" id="TIGR00023">
    <property type="entry name" value="glycerol-3-phosphate 1-O-acyltransferase PlsY"/>
    <property type="match status" value="1"/>
</dbReference>
<dbReference type="PANTHER" id="PTHR30309:SF0">
    <property type="entry name" value="GLYCEROL-3-PHOSPHATE ACYLTRANSFERASE-RELATED"/>
    <property type="match status" value="1"/>
</dbReference>
<dbReference type="PANTHER" id="PTHR30309">
    <property type="entry name" value="INNER MEMBRANE PROTEIN YGIH"/>
    <property type="match status" value="1"/>
</dbReference>
<dbReference type="Pfam" id="PF02660">
    <property type="entry name" value="G3P_acyltransf"/>
    <property type="match status" value="1"/>
</dbReference>
<dbReference type="SMART" id="SM01207">
    <property type="entry name" value="G3P_acyltransf"/>
    <property type="match status" value="1"/>
</dbReference>
<organism>
    <name type="scientific">Sulfurimonas denitrificans (strain ATCC 33889 / DSM 1251)</name>
    <name type="common">Thiomicrospira denitrificans (strain ATCC 33889 / DSM 1251)</name>
    <dbReference type="NCBI Taxonomy" id="326298"/>
    <lineage>
        <taxon>Bacteria</taxon>
        <taxon>Pseudomonadati</taxon>
        <taxon>Campylobacterota</taxon>
        <taxon>Epsilonproteobacteria</taxon>
        <taxon>Campylobacterales</taxon>
        <taxon>Sulfurimonadaceae</taxon>
        <taxon>Sulfurimonas</taxon>
    </lineage>
</organism>
<accession>Q30ST6</accession>
<name>PLSY_SULDN</name>
<feature type="chain" id="PRO_0000250345" description="Glycerol-3-phosphate acyltransferase">
    <location>
        <begin position="1"/>
        <end position="204"/>
    </location>
</feature>
<feature type="transmembrane region" description="Helical" evidence="1">
    <location>
        <begin position="8"/>
        <end position="28"/>
    </location>
</feature>
<feature type="transmembrane region" description="Helical" evidence="1">
    <location>
        <begin position="76"/>
        <end position="96"/>
    </location>
</feature>
<feature type="transmembrane region" description="Helical" evidence="1">
    <location>
        <begin position="122"/>
        <end position="142"/>
    </location>
</feature>
<feature type="transmembrane region" description="Helical" evidence="1">
    <location>
        <begin position="166"/>
        <end position="186"/>
    </location>
</feature>